<gene>
    <name type="ordered locus">VFMJ11_0572</name>
</gene>
<organism>
    <name type="scientific">Aliivibrio fischeri (strain MJ11)</name>
    <name type="common">Vibrio fischeri</name>
    <dbReference type="NCBI Taxonomy" id="388396"/>
    <lineage>
        <taxon>Bacteria</taxon>
        <taxon>Pseudomonadati</taxon>
        <taxon>Pseudomonadota</taxon>
        <taxon>Gammaproteobacteria</taxon>
        <taxon>Vibrionales</taxon>
        <taxon>Vibrionaceae</taxon>
        <taxon>Aliivibrio</taxon>
    </lineage>
</organism>
<dbReference type="EC" id="3.6.1.73" evidence="1"/>
<dbReference type="EMBL" id="CP001139">
    <property type="protein sequence ID" value="ACH67147.1"/>
    <property type="molecule type" value="Genomic_DNA"/>
</dbReference>
<dbReference type="RefSeq" id="WP_012534229.1">
    <property type="nucleotide sequence ID" value="NC_011184.1"/>
</dbReference>
<dbReference type="SMR" id="B5FAQ4"/>
<dbReference type="KEGG" id="vfm:VFMJ11_0572"/>
<dbReference type="HOGENOM" id="CLU_087417_1_0_6"/>
<dbReference type="Proteomes" id="UP000001857">
    <property type="component" value="Chromosome I"/>
</dbReference>
<dbReference type="GO" id="GO:0103023">
    <property type="term" value="F:ITPase activity"/>
    <property type="evidence" value="ECO:0007669"/>
    <property type="project" value="UniProtKB-EC"/>
</dbReference>
<dbReference type="GO" id="GO:0046872">
    <property type="term" value="F:metal ion binding"/>
    <property type="evidence" value="ECO:0007669"/>
    <property type="project" value="UniProtKB-KW"/>
</dbReference>
<dbReference type="GO" id="GO:0000166">
    <property type="term" value="F:nucleotide binding"/>
    <property type="evidence" value="ECO:0007669"/>
    <property type="project" value="UniProtKB-KW"/>
</dbReference>
<dbReference type="GO" id="GO:0017111">
    <property type="term" value="F:ribonucleoside triphosphate phosphatase activity"/>
    <property type="evidence" value="ECO:0000250"/>
    <property type="project" value="UniProtKB"/>
</dbReference>
<dbReference type="GO" id="GO:0009117">
    <property type="term" value="P:nucleotide metabolic process"/>
    <property type="evidence" value="ECO:0007669"/>
    <property type="project" value="UniProtKB-KW"/>
</dbReference>
<dbReference type="GO" id="GO:0006772">
    <property type="term" value="P:thiamine metabolic process"/>
    <property type="evidence" value="ECO:0007669"/>
    <property type="project" value="TreeGrafter"/>
</dbReference>
<dbReference type="FunFam" id="3.90.950.10:FF:000002">
    <property type="entry name" value="Inosine/xanthosine triphosphatase"/>
    <property type="match status" value="1"/>
</dbReference>
<dbReference type="Gene3D" id="3.90.950.10">
    <property type="match status" value="1"/>
</dbReference>
<dbReference type="HAMAP" id="MF_00648">
    <property type="entry name" value="Non_canon_purine_NTPase_YjjX"/>
    <property type="match status" value="1"/>
</dbReference>
<dbReference type="InterPro" id="IPR029001">
    <property type="entry name" value="ITPase-like_fam"/>
</dbReference>
<dbReference type="InterPro" id="IPR002786">
    <property type="entry name" value="Non_canon_purine_NTPase"/>
</dbReference>
<dbReference type="InterPro" id="IPR026533">
    <property type="entry name" value="NTPase/PRRC1"/>
</dbReference>
<dbReference type="InterPro" id="IPR050299">
    <property type="entry name" value="YjjX_NTPase"/>
</dbReference>
<dbReference type="NCBIfam" id="TIGR00258">
    <property type="entry name" value="inosine/xanthosine triphosphatase"/>
    <property type="match status" value="1"/>
</dbReference>
<dbReference type="NCBIfam" id="NF003459">
    <property type="entry name" value="PRK05074.1"/>
    <property type="match status" value="1"/>
</dbReference>
<dbReference type="PANTHER" id="PTHR34699">
    <property type="match status" value="1"/>
</dbReference>
<dbReference type="PANTHER" id="PTHR34699:SF2">
    <property type="entry name" value="NON-CANONICAL PURINE NTP PHOSPHATASE_PRRC1 DOMAIN-CONTAINING PROTEIN"/>
    <property type="match status" value="1"/>
</dbReference>
<dbReference type="Pfam" id="PF01931">
    <property type="entry name" value="NTPase_I-T"/>
    <property type="match status" value="1"/>
</dbReference>
<dbReference type="SUPFAM" id="SSF52972">
    <property type="entry name" value="ITPase-like"/>
    <property type="match status" value="1"/>
</dbReference>
<accession>B5FAQ4</accession>
<reference key="1">
    <citation type="submission" date="2008-08" db="EMBL/GenBank/DDBJ databases">
        <title>Complete sequence of Vibrio fischeri strain MJ11.</title>
        <authorList>
            <person name="Mandel M.J."/>
            <person name="Stabb E.V."/>
            <person name="Ruby E.G."/>
            <person name="Ferriera S."/>
            <person name="Johnson J."/>
            <person name="Kravitz S."/>
            <person name="Beeson K."/>
            <person name="Sutton G."/>
            <person name="Rogers Y.-H."/>
            <person name="Friedman R."/>
            <person name="Frazier M."/>
            <person name="Venter J.C."/>
        </authorList>
    </citation>
    <scope>NUCLEOTIDE SEQUENCE [LARGE SCALE GENOMIC DNA]</scope>
    <source>
        <strain>MJ11</strain>
    </source>
</reference>
<evidence type="ECO:0000255" key="1">
    <source>
        <dbReference type="HAMAP-Rule" id="MF_00648"/>
    </source>
</evidence>
<keyword id="KW-0378">Hydrolase</keyword>
<keyword id="KW-0460">Magnesium</keyword>
<keyword id="KW-0464">Manganese</keyword>
<keyword id="KW-0479">Metal-binding</keyword>
<keyword id="KW-0546">Nucleotide metabolism</keyword>
<keyword id="KW-0547">Nucleotide-binding</keyword>
<comment type="function">
    <text evidence="1">Phosphatase that hydrolyzes non-canonical purine nucleotides such as XTP and ITP to their respective diphosphate derivatives. Probably excludes non-canonical purines from DNA/RNA precursor pool, thus preventing their incorporation into DNA/RNA and avoiding chromosomal lesions.</text>
</comment>
<comment type="catalytic activity">
    <reaction evidence="1">
        <text>XTP + H2O = XDP + phosphate + H(+)</text>
        <dbReference type="Rhea" id="RHEA:28406"/>
        <dbReference type="ChEBI" id="CHEBI:15377"/>
        <dbReference type="ChEBI" id="CHEBI:15378"/>
        <dbReference type="ChEBI" id="CHEBI:43474"/>
        <dbReference type="ChEBI" id="CHEBI:59884"/>
        <dbReference type="ChEBI" id="CHEBI:61314"/>
        <dbReference type="EC" id="3.6.1.73"/>
    </reaction>
</comment>
<comment type="catalytic activity">
    <reaction evidence="1">
        <text>ITP + H2O = IDP + phosphate + H(+)</text>
        <dbReference type="Rhea" id="RHEA:28330"/>
        <dbReference type="ChEBI" id="CHEBI:15377"/>
        <dbReference type="ChEBI" id="CHEBI:15378"/>
        <dbReference type="ChEBI" id="CHEBI:43474"/>
        <dbReference type="ChEBI" id="CHEBI:58280"/>
        <dbReference type="ChEBI" id="CHEBI:61402"/>
        <dbReference type="EC" id="3.6.1.73"/>
    </reaction>
</comment>
<comment type="cofactor">
    <cofactor evidence="1">
        <name>Mg(2+)</name>
        <dbReference type="ChEBI" id="CHEBI:18420"/>
    </cofactor>
    <cofactor evidence="1">
        <name>Mn(2+)</name>
        <dbReference type="ChEBI" id="CHEBI:29035"/>
    </cofactor>
    <text evidence="1">Binds 1 divalent metal cation per subunit; can use either Mg(2+) or Mn(2+).</text>
</comment>
<comment type="subunit">
    <text evidence="1">Homodimer.</text>
</comment>
<comment type="similarity">
    <text evidence="1">Belongs to the YjjX NTPase family.</text>
</comment>
<proteinExistence type="inferred from homology"/>
<sequence length="170" mass="18444">MKVIIASQNPAKIAAVESAFNLAFPNDTFSFEGVSVKSGVPDQPMSCEETKQGAINRVNNAKIKLPNCDYYVGLEAGIEGNSTFAWMIIDNGLTVGESRSSSLPLPPQVIDEVKKGKELGDVMDEQFNTDNIKQKGGAIGLLTNNLLTRTSVYQQALILALIPFLHPTRF</sequence>
<name>NCPP_ALIFM</name>
<feature type="chain" id="PRO_1000130951" description="Inosine/xanthosine triphosphatase">
    <location>
        <begin position="1"/>
        <end position="170"/>
    </location>
</feature>
<protein>
    <recommendedName>
        <fullName evidence="1">Inosine/xanthosine triphosphatase</fullName>
        <shortName evidence="1">ITPase/XTPase</shortName>
        <ecNumber evidence="1">3.6.1.73</ecNumber>
    </recommendedName>
    <alternativeName>
        <fullName evidence="1">Non-canonical purine NTP phosphatase</fullName>
    </alternativeName>
    <alternativeName>
        <fullName evidence="1">Non-standard purine NTP phosphatase</fullName>
    </alternativeName>
    <alternativeName>
        <fullName evidence="1">Nucleoside-triphosphate phosphatase</fullName>
        <shortName evidence="1">NTPase</shortName>
    </alternativeName>
</protein>